<name>PURA_ECO5E</name>
<comment type="function">
    <text evidence="1">Plays an important role in the de novo pathway of purine nucleotide biosynthesis. Catalyzes the first committed step in the biosynthesis of AMP from IMP.</text>
</comment>
<comment type="catalytic activity">
    <reaction evidence="1">
        <text>IMP + L-aspartate + GTP = N(6)-(1,2-dicarboxyethyl)-AMP + GDP + phosphate + 2 H(+)</text>
        <dbReference type="Rhea" id="RHEA:15753"/>
        <dbReference type="ChEBI" id="CHEBI:15378"/>
        <dbReference type="ChEBI" id="CHEBI:29991"/>
        <dbReference type="ChEBI" id="CHEBI:37565"/>
        <dbReference type="ChEBI" id="CHEBI:43474"/>
        <dbReference type="ChEBI" id="CHEBI:57567"/>
        <dbReference type="ChEBI" id="CHEBI:58053"/>
        <dbReference type="ChEBI" id="CHEBI:58189"/>
        <dbReference type="EC" id="6.3.4.4"/>
    </reaction>
</comment>
<comment type="cofactor">
    <cofactor evidence="1">
        <name>Mg(2+)</name>
        <dbReference type="ChEBI" id="CHEBI:18420"/>
    </cofactor>
    <text evidence="1">Binds 1 Mg(2+) ion per subunit.</text>
</comment>
<comment type="pathway">
    <text evidence="1">Purine metabolism; AMP biosynthesis via de novo pathway; AMP from IMP: step 1/2.</text>
</comment>
<comment type="subunit">
    <text evidence="1">Homodimer.</text>
</comment>
<comment type="subcellular location">
    <subcellularLocation>
        <location evidence="1">Cytoplasm</location>
    </subcellularLocation>
</comment>
<comment type="similarity">
    <text evidence="1">Belongs to the adenylosuccinate synthetase family.</text>
</comment>
<evidence type="ECO:0000255" key="1">
    <source>
        <dbReference type="HAMAP-Rule" id="MF_00011"/>
    </source>
</evidence>
<dbReference type="EC" id="6.3.4.4" evidence="1"/>
<dbReference type="EMBL" id="CP001164">
    <property type="protein sequence ID" value="ACI38381.1"/>
    <property type="molecule type" value="Genomic_DNA"/>
</dbReference>
<dbReference type="RefSeq" id="WP_000527955.1">
    <property type="nucleotide sequence ID" value="NC_011353.1"/>
</dbReference>
<dbReference type="SMR" id="B5Z2I3"/>
<dbReference type="GeneID" id="75202411"/>
<dbReference type="KEGG" id="ecf:ECH74115_5693"/>
<dbReference type="HOGENOM" id="CLU_029848_0_0_6"/>
<dbReference type="UniPathway" id="UPA00075">
    <property type="reaction ID" value="UER00335"/>
</dbReference>
<dbReference type="GO" id="GO:0005737">
    <property type="term" value="C:cytoplasm"/>
    <property type="evidence" value="ECO:0007669"/>
    <property type="project" value="UniProtKB-SubCell"/>
</dbReference>
<dbReference type="GO" id="GO:0004019">
    <property type="term" value="F:adenylosuccinate synthase activity"/>
    <property type="evidence" value="ECO:0007669"/>
    <property type="project" value="UniProtKB-UniRule"/>
</dbReference>
<dbReference type="GO" id="GO:0005525">
    <property type="term" value="F:GTP binding"/>
    <property type="evidence" value="ECO:0007669"/>
    <property type="project" value="UniProtKB-UniRule"/>
</dbReference>
<dbReference type="GO" id="GO:0000287">
    <property type="term" value="F:magnesium ion binding"/>
    <property type="evidence" value="ECO:0007669"/>
    <property type="project" value="UniProtKB-UniRule"/>
</dbReference>
<dbReference type="GO" id="GO:0044208">
    <property type="term" value="P:'de novo' AMP biosynthetic process"/>
    <property type="evidence" value="ECO:0007669"/>
    <property type="project" value="UniProtKB-UniRule"/>
</dbReference>
<dbReference type="GO" id="GO:0046040">
    <property type="term" value="P:IMP metabolic process"/>
    <property type="evidence" value="ECO:0007669"/>
    <property type="project" value="TreeGrafter"/>
</dbReference>
<dbReference type="CDD" id="cd03108">
    <property type="entry name" value="AdSS"/>
    <property type="match status" value="1"/>
</dbReference>
<dbReference type="FunFam" id="1.10.300.10:FF:000001">
    <property type="entry name" value="Adenylosuccinate synthetase"/>
    <property type="match status" value="1"/>
</dbReference>
<dbReference type="FunFam" id="3.90.170.10:FF:000001">
    <property type="entry name" value="Adenylosuccinate synthetase"/>
    <property type="match status" value="1"/>
</dbReference>
<dbReference type="Gene3D" id="3.40.440.10">
    <property type="entry name" value="Adenylosuccinate Synthetase, subunit A, domain 1"/>
    <property type="match status" value="1"/>
</dbReference>
<dbReference type="Gene3D" id="1.10.300.10">
    <property type="entry name" value="Adenylosuccinate Synthetase, subunit A, domain 2"/>
    <property type="match status" value="1"/>
</dbReference>
<dbReference type="Gene3D" id="3.90.170.10">
    <property type="entry name" value="Adenylosuccinate Synthetase, subunit A, domain 3"/>
    <property type="match status" value="1"/>
</dbReference>
<dbReference type="HAMAP" id="MF_00011">
    <property type="entry name" value="Adenylosucc_synth"/>
    <property type="match status" value="1"/>
</dbReference>
<dbReference type="InterPro" id="IPR018220">
    <property type="entry name" value="Adenylosuccin_syn_GTP-bd"/>
</dbReference>
<dbReference type="InterPro" id="IPR033128">
    <property type="entry name" value="Adenylosuccin_syn_Lys_AS"/>
</dbReference>
<dbReference type="InterPro" id="IPR042109">
    <property type="entry name" value="Adenylosuccinate_synth_dom1"/>
</dbReference>
<dbReference type="InterPro" id="IPR042110">
    <property type="entry name" value="Adenylosuccinate_synth_dom2"/>
</dbReference>
<dbReference type="InterPro" id="IPR042111">
    <property type="entry name" value="Adenylosuccinate_synth_dom3"/>
</dbReference>
<dbReference type="InterPro" id="IPR001114">
    <property type="entry name" value="Adenylosuccinate_synthetase"/>
</dbReference>
<dbReference type="InterPro" id="IPR027417">
    <property type="entry name" value="P-loop_NTPase"/>
</dbReference>
<dbReference type="NCBIfam" id="NF002223">
    <property type="entry name" value="PRK01117.1"/>
    <property type="match status" value="1"/>
</dbReference>
<dbReference type="NCBIfam" id="TIGR00184">
    <property type="entry name" value="purA"/>
    <property type="match status" value="1"/>
</dbReference>
<dbReference type="PANTHER" id="PTHR11846">
    <property type="entry name" value="ADENYLOSUCCINATE SYNTHETASE"/>
    <property type="match status" value="1"/>
</dbReference>
<dbReference type="PANTHER" id="PTHR11846:SF0">
    <property type="entry name" value="ADENYLOSUCCINATE SYNTHETASE"/>
    <property type="match status" value="1"/>
</dbReference>
<dbReference type="Pfam" id="PF00709">
    <property type="entry name" value="Adenylsucc_synt"/>
    <property type="match status" value="1"/>
</dbReference>
<dbReference type="SMART" id="SM00788">
    <property type="entry name" value="Adenylsucc_synt"/>
    <property type="match status" value="1"/>
</dbReference>
<dbReference type="SUPFAM" id="SSF52540">
    <property type="entry name" value="P-loop containing nucleoside triphosphate hydrolases"/>
    <property type="match status" value="1"/>
</dbReference>
<dbReference type="PROSITE" id="PS01266">
    <property type="entry name" value="ADENYLOSUCCIN_SYN_1"/>
    <property type="match status" value="1"/>
</dbReference>
<dbReference type="PROSITE" id="PS00513">
    <property type="entry name" value="ADENYLOSUCCIN_SYN_2"/>
    <property type="match status" value="1"/>
</dbReference>
<feature type="chain" id="PRO_1000089289" description="Adenylosuccinate synthetase">
    <location>
        <begin position="1"/>
        <end position="432"/>
    </location>
</feature>
<feature type="active site" description="Proton acceptor" evidence="1">
    <location>
        <position position="14"/>
    </location>
</feature>
<feature type="active site" description="Proton donor" evidence="1">
    <location>
        <position position="42"/>
    </location>
</feature>
<feature type="binding site" evidence="1">
    <location>
        <begin position="13"/>
        <end position="19"/>
    </location>
    <ligand>
        <name>GTP</name>
        <dbReference type="ChEBI" id="CHEBI:37565"/>
    </ligand>
</feature>
<feature type="binding site" description="in other chain" evidence="1">
    <location>
        <begin position="14"/>
        <end position="17"/>
    </location>
    <ligand>
        <name>IMP</name>
        <dbReference type="ChEBI" id="CHEBI:58053"/>
        <note>ligand shared between dimeric partners</note>
    </ligand>
</feature>
<feature type="binding site" evidence="1">
    <location>
        <position position="14"/>
    </location>
    <ligand>
        <name>Mg(2+)</name>
        <dbReference type="ChEBI" id="CHEBI:18420"/>
    </ligand>
</feature>
<feature type="binding site" description="in other chain" evidence="1">
    <location>
        <begin position="39"/>
        <end position="42"/>
    </location>
    <ligand>
        <name>IMP</name>
        <dbReference type="ChEBI" id="CHEBI:58053"/>
        <note>ligand shared between dimeric partners</note>
    </ligand>
</feature>
<feature type="binding site" evidence="1">
    <location>
        <begin position="41"/>
        <end position="43"/>
    </location>
    <ligand>
        <name>GTP</name>
        <dbReference type="ChEBI" id="CHEBI:37565"/>
    </ligand>
</feature>
<feature type="binding site" evidence="1">
    <location>
        <position position="41"/>
    </location>
    <ligand>
        <name>Mg(2+)</name>
        <dbReference type="ChEBI" id="CHEBI:18420"/>
    </ligand>
</feature>
<feature type="binding site" description="in other chain" evidence="1">
    <location>
        <position position="130"/>
    </location>
    <ligand>
        <name>IMP</name>
        <dbReference type="ChEBI" id="CHEBI:58053"/>
        <note>ligand shared between dimeric partners</note>
    </ligand>
</feature>
<feature type="binding site" evidence="1">
    <location>
        <position position="144"/>
    </location>
    <ligand>
        <name>IMP</name>
        <dbReference type="ChEBI" id="CHEBI:58053"/>
        <note>ligand shared between dimeric partners</note>
    </ligand>
</feature>
<feature type="binding site" description="in other chain" evidence="1">
    <location>
        <position position="225"/>
    </location>
    <ligand>
        <name>IMP</name>
        <dbReference type="ChEBI" id="CHEBI:58053"/>
        <note>ligand shared between dimeric partners</note>
    </ligand>
</feature>
<feature type="binding site" description="in other chain" evidence="1">
    <location>
        <position position="240"/>
    </location>
    <ligand>
        <name>IMP</name>
        <dbReference type="ChEBI" id="CHEBI:58053"/>
        <note>ligand shared between dimeric partners</note>
    </ligand>
</feature>
<feature type="binding site" evidence="1">
    <location>
        <begin position="300"/>
        <end position="306"/>
    </location>
    <ligand>
        <name>substrate</name>
    </ligand>
</feature>
<feature type="binding site" description="in other chain" evidence="1">
    <location>
        <position position="304"/>
    </location>
    <ligand>
        <name>IMP</name>
        <dbReference type="ChEBI" id="CHEBI:58053"/>
        <note>ligand shared between dimeric partners</note>
    </ligand>
</feature>
<feature type="binding site" evidence="1">
    <location>
        <position position="306"/>
    </location>
    <ligand>
        <name>GTP</name>
        <dbReference type="ChEBI" id="CHEBI:37565"/>
    </ligand>
</feature>
<feature type="binding site" evidence="1">
    <location>
        <begin position="332"/>
        <end position="334"/>
    </location>
    <ligand>
        <name>GTP</name>
        <dbReference type="ChEBI" id="CHEBI:37565"/>
    </ligand>
</feature>
<feature type="binding site" evidence="1">
    <location>
        <begin position="415"/>
        <end position="417"/>
    </location>
    <ligand>
        <name>GTP</name>
        <dbReference type="ChEBI" id="CHEBI:37565"/>
    </ligand>
</feature>
<reference key="1">
    <citation type="journal article" date="2011" name="Proc. Natl. Acad. Sci. U.S.A.">
        <title>Genomic anatomy of Escherichia coli O157:H7 outbreaks.</title>
        <authorList>
            <person name="Eppinger M."/>
            <person name="Mammel M.K."/>
            <person name="Leclerc J.E."/>
            <person name="Ravel J."/>
            <person name="Cebula T.A."/>
        </authorList>
    </citation>
    <scope>NUCLEOTIDE SEQUENCE [LARGE SCALE GENOMIC DNA]</scope>
    <source>
        <strain>EC4115 / EHEC</strain>
    </source>
</reference>
<protein>
    <recommendedName>
        <fullName evidence="1">Adenylosuccinate synthetase</fullName>
        <shortName evidence="1">AMPSase</shortName>
        <shortName evidence="1">AdSS</shortName>
        <ecNumber evidence="1">6.3.4.4</ecNumber>
    </recommendedName>
    <alternativeName>
        <fullName evidence="1">IMP--aspartate ligase</fullName>
    </alternativeName>
</protein>
<gene>
    <name evidence="1" type="primary">purA</name>
    <name type="ordered locus">ECH74115_5693</name>
</gene>
<keyword id="KW-0963">Cytoplasm</keyword>
<keyword id="KW-0342">GTP-binding</keyword>
<keyword id="KW-0436">Ligase</keyword>
<keyword id="KW-0460">Magnesium</keyword>
<keyword id="KW-0479">Metal-binding</keyword>
<keyword id="KW-0547">Nucleotide-binding</keyword>
<keyword id="KW-0658">Purine biosynthesis</keyword>
<organism>
    <name type="scientific">Escherichia coli O157:H7 (strain EC4115 / EHEC)</name>
    <dbReference type="NCBI Taxonomy" id="444450"/>
    <lineage>
        <taxon>Bacteria</taxon>
        <taxon>Pseudomonadati</taxon>
        <taxon>Pseudomonadota</taxon>
        <taxon>Gammaproteobacteria</taxon>
        <taxon>Enterobacterales</taxon>
        <taxon>Enterobacteriaceae</taxon>
        <taxon>Escherichia</taxon>
    </lineage>
</organism>
<sequence length="432" mass="47345">MGNNVVVLGTQWGDEGKGKIVDLLTERAKYVVRYQGGHNAGHTLVINGEKTVLHLIPSGILRENVTSIIGNGVVLSPAALMKEMKELEDRGIPVRERLLLSEACPLILDYHVALDNAREKARGAKAIGTTGRGIGPAYEDKVARRGLRVGDLFDKETFAEKLKEVMEYHNFQLVNYYKAEAVDYQKVLDDTMAVADILTSMVVDVSDLLDQARQRGDFVMFEGAQGTLLDIDHGTYPYVTSSNTTAGGVATGSGLGPRYVDYVLGILKAYSTRVGAGPFPTELFDETGEFLCKQGNEFGATTGRRRRTGWLDTVAVRRAVQLNSLSGFCLTKLDVLDGLKEVKLCVAYRMPDGREVTTTPLAADDWKGVEPIYETMPGWSESTFGVKDRSGLPQAALNYIKRIEELTGVPIDIISTGPDRTETMILRDPFDA</sequence>
<accession>B5Z2I3</accession>
<proteinExistence type="inferred from homology"/>